<protein>
    <recommendedName>
        <fullName evidence="1">Large ribosomal subunit protein uL30</fullName>
    </recommendedName>
    <alternativeName>
        <fullName evidence="2">50S ribosomal protein L30</fullName>
    </alternativeName>
</protein>
<organism>
    <name type="scientific">Shewanella baltica (strain OS155 / ATCC BAA-1091)</name>
    <dbReference type="NCBI Taxonomy" id="325240"/>
    <lineage>
        <taxon>Bacteria</taxon>
        <taxon>Pseudomonadati</taxon>
        <taxon>Pseudomonadota</taxon>
        <taxon>Gammaproteobacteria</taxon>
        <taxon>Alteromonadales</taxon>
        <taxon>Shewanellaceae</taxon>
        <taxon>Shewanella</taxon>
    </lineage>
</organism>
<evidence type="ECO:0000255" key="1">
    <source>
        <dbReference type="HAMAP-Rule" id="MF_01371"/>
    </source>
</evidence>
<evidence type="ECO:0000305" key="2"/>
<comment type="subunit">
    <text evidence="1">Part of the 50S ribosomal subunit.</text>
</comment>
<comment type="similarity">
    <text evidence="1">Belongs to the universal ribosomal protein uL30 family.</text>
</comment>
<accession>A3DA54</accession>
<reference key="1">
    <citation type="submission" date="2007-02" db="EMBL/GenBank/DDBJ databases">
        <title>Complete sequence of chromosome of Shewanella baltica OS155.</title>
        <authorList>
            <consortium name="US DOE Joint Genome Institute"/>
            <person name="Copeland A."/>
            <person name="Lucas S."/>
            <person name="Lapidus A."/>
            <person name="Barry K."/>
            <person name="Detter J.C."/>
            <person name="Glavina del Rio T."/>
            <person name="Hammon N."/>
            <person name="Israni S."/>
            <person name="Dalin E."/>
            <person name="Tice H."/>
            <person name="Pitluck S."/>
            <person name="Sims D.R."/>
            <person name="Brettin T."/>
            <person name="Bruce D."/>
            <person name="Han C."/>
            <person name="Tapia R."/>
            <person name="Brainard J."/>
            <person name="Schmutz J."/>
            <person name="Larimer F."/>
            <person name="Land M."/>
            <person name="Hauser L."/>
            <person name="Kyrpides N."/>
            <person name="Mikhailova N."/>
            <person name="Brettar I."/>
            <person name="Klappenbach J."/>
            <person name="Konstantinidis K."/>
            <person name="Rodrigues J."/>
            <person name="Tiedje J."/>
            <person name="Richardson P."/>
        </authorList>
    </citation>
    <scope>NUCLEOTIDE SEQUENCE [LARGE SCALE GENOMIC DNA]</scope>
    <source>
        <strain>OS155 / ATCC BAA-1091</strain>
    </source>
</reference>
<feature type="chain" id="PRO_1000056105" description="Large ribosomal subunit protein uL30">
    <location>
        <begin position="1"/>
        <end position="60"/>
    </location>
</feature>
<proteinExistence type="inferred from homology"/>
<sequence>MATKTVKVTQTKSGIGRLPKHRATLTGLGLRRIGHTVELEDTPSVRGMINKVYYMVKVED</sequence>
<name>RL30_SHEB5</name>
<gene>
    <name evidence="1" type="primary">rpmD</name>
    <name type="ordered locus">Sbal_4152</name>
</gene>
<dbReference type="EMBL" id="CP000563">
    <property type="protein sequence ID" value="ABN63617.1"/>
    <property type="molecule type" value="Genomic_DNA"/>
</dbReference>
<dbReference type="RefSeq" id="WP_006083582.1">
    <property type="nucleotide sequence ID" value="NC_009052.1"/>
</dbReference>
<dbReference type="SMR" id="A3DA54"/>
<dbReference type="STRING" id="325240.Sbal_4152"/>
<dbReference type="GeneID" id="75190600"/>
<dbReference type="KEGG" id="sbl:Sbal_4152"/>
<dbReference type="HOGENOM" id="CLU_131047_1_4_6"/>
<dbReference type="OrthoDB" id="9812790at2"/>
<dbReference type="Proteomes" id="UP000001557">
    <property type="component" value="Chromosome"/>
</dbReference>
<dbReference type="GO" id="GO:0022625">
    <property type="term" value="C:cytosolic large ribosomal subunit"/>
    <property type="evidence" value="ECO:0007669"/>
    <property type="project" value="TreeGrafter"/>
</dbReference>
<dbReference type="GO" id="GO:0003735">
    <property type="term" value="F:structural constituent of ribosome"/>
    <property type="evidence" value="ECO:0007669"/>
    <property type="project" value="InterPro"/>
</dbReference>
<dbReference type="GO" id="GO:0006412">
    <property type="term" value="P:translation"/>
    <property type="evidence" value="ECO:0007669"/>
    <property type="project" value="UniProtKB-UniRule"/>
</dbReference>
<dbReference type="CDD" id="cd01658">
    <property type="entry name" value="Ribosomal_L30"/>
    <property type="match status" value="1"/>
</dbReference>
<dbReference type="FunFam" id="3.30.1390.20:FF:000001">
    <property type="entry name" value="50S ribosomal protein L30"/>
    <property type="match status" value="1"/>
</dbReference>
<dbReference type="Gene3D" id="3.30.1390.20">
    <property type="entry name" value="Ribosomal protein L30, ferredoxin-like fold domain"/>
    <property type="match status" value="1"/>
</dbReference>
<dbReference type="HAMAP" id="MF_01371_B">
    <property type="entry name" value="Ribosomal_uL30_B"/>
    <property type="match status" value="1"/>
</dbReference>
<dbReference type="InterPro" id="IPR036919">
    <property type="entry name" value="Ribo_uL30_ferredoxin-like_sf"/>
</dbReference>
<dbReference type="InterPro" id="IPR005996">
    <property type="entry name" value="Ribosomal_uL30_bac-type"/>
</dbReference>
<dbReference type="InterPro" id="IPR018038">
    <property type="entry name" value="Ribosomal_uL30_CS"/>
</dbReference>
<dbReference type="InterPro" id="IPR016082">
    <property type="entry name" value="Ribosomal_uL30_ferredoxin-like"/>
</dbReference>
<dbReference type="NCBIfam" id="TIGR01308">
    <property type="entry name" value="rpmD_bact"/>
    <property type="match status" value="1"/>
</dbReference>
<dbReference type="PANTHER" id="PTHR15892:SF2">
    <property type="entry name" value="LARGE RIBOSOMAL SUBUNIT PROTEIN UL30M"/>
    <property type="match status" value="1"/>
</dbReference>
<dbReference type="PANTHER" id="PTHR15892">
    <property type="entry name" value="MITOCHONDRIAL RIBOSOMAL PROTEIN L30"/>
    <property type="match status" value="1"/>
</dbReference>
<dbReference type="Pfam" id="PF00327">
    <property type="entry name" value="Ribosomal_L30"/>
    <property type="match status" value="1"/>
</dbReference>
<dbReference type="PIRSF" id="PIRSF002211">
    <property type="entry name" value="Ribosomal_L30_bac-type"/>
    <property type="match status" value="1"/>
</dbReference>
<dbReference type="SUPFAM" id="SSF55129">
    <property type="entry name" value="Ribosomal protein L30p/L7e"/>
    <property type="match status" value="1"/>
</dbReference>
<dbReference type="PROSITE" id="PS00634">
    <property type="entry name" value="RIBOSOMAL_L30"/>
    <property type="match status" value="1"/>
</dbReference>
<keyword id="KW-1185">Reference proteome</keyword>
<keyword id="KW-0687">Ribonucleoprotein</keyword>
<keyword id="KW-0689">Ribosomal protein</keyword>